<organism>
    <name type="scientific">Bos taurus</name>
    <name type="common">Bovine</name>
    <dbReference type="NCBI Taxonomy" id="9913"/>
    <lineage>
        <taxon>Eukaryota</taxon>
        <taxon>Metazoa</taxon>
        <taxon>Chordata</taxon>
        <taxon>Craniata</taxon>
        <taxon>Vertebrata</taxon>
        <taxon>Euteleostomi</taxon>
        <taxon>Mammalia</taxon>
        <taxon>Eutheria</taxon>
        <taxon>Laurasiatheria</taxon>
        <taxon>Artiodactyla</taxon>
        <taxon>Ruminantia</taxon>
        <taxon>Pecora</taxon>
        <taxon>Bovidae</taxon>
        <taxon>Bovinae</taxon>
        <taxon>Bos</taxon>
    </lineage>
</organism>
<protein>
    <recommendedName>
        <fullName>Ammonium transporter Rh type B</fullName>
    </recommendedName>
    <alternativeName>
        <fullName>Rhesus blood group family type B glycoprotein</fullName>
        <shortName>Rh family type B glycoprotein</shortName>
        <shortName>Rh type B glycoprotein</shortName>
    </alternativeName>
</protein>
<gene>
    <name type="primary">RHBG</name>
</gene>
<comment type="function">
    <text evidence="2">Ammonium transporter involved in the maintenance of acid-base homeostasis. Transports ammonium and its related derivative methylammonium across the basolateral plasma membrane of epithelial cells likely contributing to renal transepithelial ammonia transport and ammonia metabolism. May transport either NH4(+) or NH3 ammonia species predominantly mediating an electrogenic NH4(+) transport (By similarity). May act as a CO2 channel providing for renal acid secretion (By similarity).</text>
</comment>
<comment type="catalytic activity">
    <reaction evidence="2">
        <text>NH4(+)(in) = NH4(+)(out)</text>
        <dbReference type="Rhea" id="RHEA:28747"/>
        <dbReference type="ChEBI" id="CHEBI:28938"/>
    </reaction>
    <physiologicalReaction direction="left-to-right" evidence="2">
        <dbReference type="Rhea" id="RHEA:28748"/>
    </physiologicalReaction>
    <physiologicalReaction direction="right-to-left" evidence="2">
        <dbReference type="Rhea" id="RHEA:28749"/>
    </physiologicalReaction>
</comment>
<comment type="catalytic activity">
    <reaction evidence="2">
        <text>methylamine(out) = methylamine(in)</text>
        <dbReference type="Rhea" id="RHEA:74391"/>
        <dbReference type="ChEBI" id="CHEBI:59338"/>
    </reaction>
    <physiologicalReaction direction="left-to-right" evidence="2">
        <dbReference type="Rhea" id="RHEA:74392"/>
    </physiologicalReaction>
</comment>
<comment type="catalytic activity">
    <reaction evidence="2">
        <text>CO2(out) = CO2(in)</text>
        <dbReference type="Rhea" id="RHEA:74891"/>
        <dbReference type="ChEBI" id="CHEBI:16526"/>
    </reaction>
    <physiologicalReaction direction="left-to-right" evidence="2">
        <dbReference type="Rhea" id="RHEA:74892"/>
    </physiologicalReaction>
</comment>
<comment type="subunit">
    <text evidence="2">Interacts (via C-terminus) with ANK2 and ANK3; required for targeting to the basolateral membrane.</text>
</comment>
<comment type="subcellular location">
    <subcellularLocation>
        <location evidence="2">Cell membrane</location>
        <topology evidence="2">Multi-pass membrane protein</topology>
    </subcellularLocation>
    <subcellularLocation>
        <location evidence="2">Basolateral cell membrane</location>
        <topology evidence="3">Multi-pass membrane protein</topology>
    </subcellularLocation>
</comment>
<comment type="alternative products">
    <event type="alternative splicing"/>
    <isoform>
        <id>Q95M77-1</id>
        <name>1</name>
        <sequence type="displayed"/>
    </isoform>
    <isoform>
        <id>Q95M77-2</id>
        <name>2</name>
        <sequence type="described" ref="VSP_036401 VSP_036402"/>
    </isoform>
</comment>
<comment type="PTM">
    <text evidence="1">N-glycosylated.</text>
</comment>
<comment type="similarity">
    <text evidence="5">Belongs to the ammonium transporter (TC 2.A.49) family. Rh subfamily.</text>
</comment>
<sequence>MAWSPRHSAGRRLQLPLLCLLLQGATAILFAVFVRYNRETDAALWHWGNHSNADNEFYFRYPSFQDVHAMIFVGFGFLMVFLQRYGFGSVGFTFLLAAFALQWSTLIQGFFHSFRGGYILVGMESMINADFCAGAVLISFGAVLGKTGPVQLLLMALLEVVLFGLNEFVLLSLLEVKDAGGSMTIHTFGAYFGLILSRVLYRPQLEKSKHRQGSVYHSDLFAMIGTIFLWIFWPSFNSAPTALGDGQHRTALNTYYSLTASTLSTFALSALVGGDGRLDMVHVQNAALAGGVVVGTSAEMMLTPFGALAAGFLAGAISTLGYKFVTPILESKLKVQDTCGVHNLHGMPGVLGALLGGLVAGLATREAYGDGLESVFPLIAEGQRSATSQAMHQLFGLFVTLTFASVGGGLGGLLLRLPILDSPPDSQCYEDQIYWEVPGEHEHLAQGSEETETQA</sequence>
<proteinExistence type="evidence at transcript level"/>
<reference key="1">
    <citation type="journal article" date="2001" name="Blood Cells Mol. Dis.">
        <title>New insights into the Rh superfamily of genes and proteins in erythroid cells and nonerythroid tissues.</title>
        <authorList>
            <person name="Huang C.-H."/>
            <person name="Liu P.Z."/>
        </authorList>
    </citation>
    <scope>NUCLEOTIDE SEQUENCE [MRNA] (ISOFORM 2)</scope>
</reference>
<reference key="2">
    <citation type="submission" date="2007-02" db="EMBL/GenBank/DDBJ databases">
        <authorList>
            <consortium name="NIH - Mammalian Gene Collection (MGC) project"/>
        </authorList>
    </citation>
    <scope>NUCLEOTIDE SEQUENCE [LARGE SCALE MRNA] (ISOFORM 1)</scope>
    <source>
        <strain>Hereford</strain>
        <tissue>Fetal skin</tissue>
    </source>
</reference>
<evidence type="ECO:0000250" key="1"/>
<evidence type="ECO:0000250" key="2">
    <source>
        <dbReference type="UniProtKB" id="Q9H310"/>
    </source>
</evidence>
<evidence type="ECO:0000255" key="3"/>
<evidence type="ECO:0000303" key="4">
    <source>
    </source>
</evidence>
<evidence type="ECO:0000305" key="5"/>
<keyword id="KW-0025">Alternative splicing</keyword>
<keyword id="KW-0924">Ammonia transport</keyword>
<keyword id="KW-1003">Cell membrane</keyword>
<keyword id="KW-0325">Glycoprotein</keyword>
<keyword id="KW-0472">Membrane</keyword>
<keyword id="KW-1185">Reference proteome</keyword>
<keyword id="KW-0812">Transmembrane</keyword>
<keyword id="KW-1133">Transmembrane helix</keyword>
<keyword id="KW-0813">Transport</keyword>
<accession>Q95M77</accession>
<accession>A3KMW3</accession>
<feature type="chain" id="PRO_0000283594" description="Ammonium transporter Rh type B">
    <location>
        <begin position="1"/>
        <end position="455"/>
    </location>
</feature>
<feature type="topological domain" description="Cytoplasmic" evidence="3">
    <location>
        <begin position="1"/>
        <end position="13"/>
    </location>
</feature>
<feature type="transmembrane region" description="Helical" evidence="3">
    <location>
        <begin position="14"/>
        <end position="34"/>
    </location>
</feature>
<feature type="topological domain" description="Extracellular" evidence="3">
    <location>
        <begin position="35"/>
        <end position="61"/>
    </location>
</feature>
<feature type="transmembrane region" description="Helical" evidence="3">
    <location>
        <begin position="62"/>
        <end position="82"/>
    </location>
</feature>
<feature type="topological domain" description="Cytoplasmic" evidence="3">
    <location>
        <begin position="83"/>
        <end position="86"/>
    </location>
</feature>
<feature type="transmembrane region" description="Helical" evidence="3">
    <location>
        <begin position="87"/>
        <end position="107"/>
    </location>
</feature>
<feature type="topological domain" description="Extracellular" evidence="3">
    <location>
        <begin position="108"/>
        <end position="124"/>
    </location>
</feature>
<feature type="transmembrane region" description="Helical" evidence="3">
    <location>
        <begin position="125"/>
        <end position="145"/>
    </location>
</feature>
<feature type="topological domain" description="Cytoplasmic" evidence="3">
    <location>
        <begin position="146"/>
        <end position="151"/>
    </location>
</feature>
<feature type="transmembrane region" description="Helical" evidence="3">
    <location>
        <begin position="152"/>
        <end position="172"/>
    </location>
</feature>
<feature type="topological domain" description="Extracellular" evidence="3">
    <location>
        <begin position="173"/>
        <end position="179"/>
    </location>
</feature>
<feature type="transmembrane region" description="Helical" evidence="3">
    <location>
        <begin position="180"/>
        <end position="200"/>
    </location>
</feature>
<feature type="topological domain" description="Cytoplasmic" evidence="3">
    <location>
        <begin position="201"/>
        <end position="219"/>
    </location>
</feature>
<feature type="transmembrane region" description="Helical" evidence="3">
    <location>
        <begin position="220"/>
        <end position="240"/>
    </location>
</feature>
<feature type="topological domain" description="Extracellular" evidence="3">
    <location>
        <begin position="241"/>
        <end position="253"/>
    </location>
</feature>
<feature type="transmembrane region" description="Helical" evidence="3">
    <location>
        <begin position="254"/>
        <end position="274"/>
    </location>
</feature>
<feature type="topological domain" description="Cytoplasmic" evidence="3">
    <location>
        <begin position="275"/>
        <end position="277"/>
    </location>
</feature>
<feature type="transmembrane region" description="Helical" evidence="3">
    <location>
        <begin position="278"/>
        <end position="298"/>
    </location>
</feature>
<feature type="topological domain" description="Extracellular" evidence="3">
    <location>
        <position position="299"/>
    </location>
</feature>
<feature type="transmembrane region" description="Helical" evidence="3">
    <location>
        <begin position="300"/>
        <end position="320"/>
    </location>
</feature>
<feature type="topological domain" description="Cytoplasmic" evidence="3">
    <location>
        <begin position="321"/>
        <end position="343"/>
    </location>
</feature>
<feature type="transmembrane region" description="Helical" evidence="3">
    <location>
        <begin position="344"/>
        <end position="364"/>
    </location>
</feature>
<feature type="topological domain" description="Extracellular" evidence="3">
    <location>
        <begin position="365"/>
        <end position="393"/>
    </location>
</feature>
<feature type="transmembrane region" description="Helical" evidence="3">
    <location>
        <begin position="394"/>
        <end position="414"/>
    </location>
</feature>
<feature type="topological domain" description="Cytoplasmic" evidence="3">
    <location>
        <begin position="415"/>
        <end position="455"/>
    </location>
</feature>
<feature type="region of interest" description="Interaction with ANK3" evidence="1">
    <location>
        <begin position="416"/>
        <end position="424"/>
    </location>
</feature>
<feature type="short sequence motif" description="Basolateral sorting signal" evidence="1">
    <location>
        <begin position="429"/>
        <end position="432"/>
    </location>
</feature>
<feature type="glycosylation site" description="N-linked (GlcNAc...) asparagine" evidence="3">
    <location>
        <position position="49"/>
    </location>
</feature>
<feature type="splice variant" id="VSP_036401" description="In isoform 2." evidence="4">
    <original>F</original>
    <variation>FVLLSLLEVVLFGLNEF</variation>
    <location>
        <position position="168"/>
    </location>
</feature>
<feature type="splice variant" id="VSP_036402" description="In isoform 2." evidence="4">
    <location>
        <begin position="281"/>
        <end position="326"/>
    </location>
</feature>
<feature type="sequence conflict" description="In Ref. 2; AAI33319." evidence="5" ref="2">
    <location>
        <begin position="208"/>
        <end position="209"/>
    </location>
</feature>
<dbReference type="EMBL" id="AY013259">
    <property type="protein sequence ID" value="AAK14649.1"/>
    <property type="molecule type" value="mRNA"/>
</dbReference>
<dbReference type="EMBL" id="BC133318">
    <property type="protein sequence ID" value="AAI33319.1"/>
    <property type="molecule type" value="mRNA"/>
</dbReference>
<dbReference type="RefSeq" id="NP_001421685.1">
    <molecule id="Q95M77-1"/>
    <property type="nucleotide sequence ID" value="NM_001434756.1"/>
</dbReference>
<dbReference type="RefSeq" id="NP_777148.1">
    <property type="nucleotide sequence ID" value="NM_174723.2"/>
</dbReference>
<dbReference type="RefSeq" id="XP_005203673.1">
    <property type="nucleotide sequence ID" value="XM_005203616.3"/>
</dbReference>
<dbReference type="SMR" id="Q95M77"/>
<dbReference type="FunCoup" id="Q95M77">
    <property type="interactions" value="103"/>
</dbReference>
<dbReference type="STRING" id="9913.ENSBTAP00000046932"/>
<dbReference type="GlyCosmos" id="Q95M77">
    <property type="glycosylation" value="1 site, No reported glycans"/>
</dbReference>
<dbReference type="GlyGen" id="Q95M77">
    <property type="glycosylation" value="1 site"/>
</dbReference>
<dbReference type="PaxDb" id="9913-ENSBTAP00000046932"/>
<dbReference type="Ensembl" id="ENSBTAT00000050191.5">
    <molecule id="Q95M77-1"/>
    <property type="protein sequence ID" value="ENSBTAP00000046932.3"/>
    <property type="gene ID" value="ENSBTAG00000012234.7"/>
</dbReference>
<dbReference type="GeneID" id="282709"/>
<dbReference type="KEGG" id="bta:282709"/>
<dbReference type="CTD" id="57127"/>
<dbReference type="VEuPathDB" id="HostDB:ENSBTAG00000012234"/>
<dbReference type="eggNOG" id="KOG3796">
    <property type="taxonomic scope" value="Eukaryota"/>
</dbReference>
<dbReference type="GeneTree" id="ENSGT00950000182844"/>
<dbReference type="HOGENOM" id="CLU_021386_0_0_1"/>
<dbReference type="InParanoid" id="Q95M77"/>
<dbReference type="OMA" id="DNIYWEV"/>
<dbReference type="OrthoDB" id="534912at2759"/>
<dbReference type="TreeFam" id="TF314450"/>
<dbReference type="Reactome" id="R-BTA-444411">
    <property type="pathway name" value="Rhesus glycoproteins mediate ammonium transport"/>
</dbReference>
<dbReference type="Proteomes" id="UP000009136">
    <property type="component" value="Chromosome 3"/>
</dbReference>
<dbReference type="Bgee" id="ENSBTAG00000012234">
    <property type="expression patterns" value="Expressed in urethra and 85 other cell types or tissues"/>
</dbReference>
<dbReference type="GO" id="GO:0016323">
    <property type="term" value="C:basolateral plasma membrane"/>
    <property type="evidence" value="ECO:0000250"/>
    <property type="project" value="UniProtKB"/>
</dbReference>
<dbReference type="GO" id="GO:0005886">
    <property type="term" value="C:plasma membrane"/>
    <property type="evidence" value="ECO:0000318"/>
    <property type="project" value="GO_Central"/>
</dbReference>
<dbReference type="GO" id="GO:0014731">
    <property type="term" value="C:spectrin-associated cytoskeleton"/>
    <property type="evidence" value="ECO:0000250"/>
    <property type="project" value="UniProtKB"/>
</dbReference>
<dbReference type="GO" id="GO:0008519">
    <property type="term" value="F:ammonium channel activity"/>
    <property type="evidence" value="ECO:0000250"/>
    <property type="project" value="UniProtKB"/>
</dbReference>
<dbReference type="GO" id="GO:0030506">
    <property type="term" value="F:ankyrin binding"/>
    <property type="evidence" value="ECO:0007669"/>
    <property type="project" value="Ensembl"/>
</dbReference>
<dbReference type="GO" id="GO:0035379">
    <property type="term" value="F:carbon dioxide transmembrane transporter activity"/>
    <property type="evidence" value="ECO:0000250"/>
    <property type="project" value="UniProtKB"/>
</dbReference>
<dbReference type="GO" id="GO:0097272">
    <property type="term" value="P:ammonium homeostasis"/>
    <property type="evidence" value="ECO:0000318"/>
    <property type="project" value="GO_Central"/>
</dbReference>
<dbReference type="GO" id="GO:0072488">
    <property type="term" value="P:ammonium transmembrane transport"/>
    <property type="evidence" value="ECO:0000250"/>
    <property type="project" value="UniProtKB"/>
</dbReference>
<dbReference type="GO" id="GO:0070634">
    <property type="term" value="P:transepithelial ammonium transport"/>
    <property type="evidence" value="ECO:0007669"/>
    <property type="project" value="Ensembl"/>
</dbReference>
<dbReference type="FunFam" id="1.10.3430.10:FF:000001">
    <property type="entry name" value="Ammonium transporter Rh type C"/>
    <property type="match status" value="1"/>
</dbReference>
<dbReference type="Gene3D" id="1.10.3430.10">
    <property type="entry name" value="Ammonium transporter AmtB like domains"/>
    <property type="match status" value="1"/>
</dbReference>
<dbReference type="InterPro" id="IPR029020">
    <property type="entry name" value="Ammonium/urea_transptr"/>
</dbReference>
<dbReference type="InterPro" id="IPR024041">
    <property type="entry name" value="NH4_transpt_AmtB-like_dom"/>
</dbReference>
<dbReference type="InterPro" id="IPR002229">
    <property type="entry name" value="RhesusRHD"/>
</dbReference>
<dbReference type="PANTHER" id="PTHR11730">
    <property type="entry name" value="AMMONIUM TRANSPORTER"/>
    <property type="match status" value="1"/>
</dbReference>
<dbReference type="PANTHER" id="PTHR11730:SF42">
    <property type="entry name" value="AMMONIUM TRANSPORTER RH TYPE B"/>
    <property type="match status" value="1"/>
</dbReference>
<dbReference type="Pfam" id="PF00909">
    <property type="entry name" value="Ammonium_transp"/>
    <property type="match status" value="1"/>
</dbReference>
<dbReference type="PRINTS" id="PR00342">
    <property type="entry name" value="RHESUSRHD"/>
</dbReference>
<dbReference type="SUPFAM" id="SSF111352">
    <property type="entry name" value="Ammonium transporter"/>
    <property type="match status" value="1"/>
</dbReference>
<name>RHBG_BOVIN</name>